<name>RL33_CAUVC</name>
<keyword id="KW-1185">Reference proteome</keyword>
<keyword id="KW-0687">Ribonucleoprotein</keyword>
<keyword id="KW-0689">Ribosomal protein</keyword>
<gene>
    <name evidence="1" type="primary">rpmG</name>
    <name type="ordered locus">CC_2459</name>
</gene>
<feature type="chain" id="PRO_0000170148" description="Large ribosomal subunit protein bL33">
    <location>
        <begin position="1"/>
        <end position="55"/>
    </location>
</feature>
<dbReference type="EMBL" id="AE005673">
    <property type="protein sequence ID" value="AAK24430.1"/>
    <property type="molecule type" value="Genomic_DNA"/>
</dbReference>
<dbReference type="PIR" id="B87554">
    <property type="entry name" value="B87554"/>
</dbReference>
<dbReference type="RefSeq" id="NP_421262.1">
    <property type="nucleotide sequence ID" value="NC_002696.2"/>
</dbReference>
<dbReference type="RefSeq" id="WP_010920317.1">
    <property type="nucleotide sequence ID" value="NC_002696.2"/>
</dbReference>
<dbReference type="SMR" id="Q9A5I8"/>
<dbReference type="STRING" id="190650.CC_2459"/>
<dbReference type="EnsemblBacteria" id="AAK24430">
    <property type="protein sequence ID" value="AAK24430"/>
    <property type="gene ID" value="CC_2459"/>
</dbReference>
<dbReference type="KEGG" id="ccr:CC_2459"/>
<dbReference type="PATRIC" id="fig|190650.5.peg.2476"/>
<dbReference type="eggNOG" id="COG0267">
    <property type="taxonomic scope" value="Bacteria"/>
</dbReference>
<dbReference type="HOGENOM" id="CLU_190949_1_1_5"/>
<dbReference type="BioCyc" id="CAULO:CC2459-MONOMER"/>
<dbReference type="Proteomes" id="UP000001816">
    <property type="component" value="Chromosome"/>
</dbReference>
<dbReference type="GO" id="GO:0022625">
    <property type="term" value="C:cytosolic large ribosomal subunit"/>
    <property type="evidence" value="ECO:0007669"/>
    <property type="project" value="TreeGrafter"/>
</dbReference>
<dbReference type="GO" id="GO:0003735">
    <property type="term" value="F:structural constituent of ribosome"/>
    <property type="evidence" value="ECO:0007669"/>
    <property type="project" value="InterPro"/>
</dbReference>
<dbReference type="GO" id="GO:0006412">
    <property type="term" value="P:translation"/>
    <property type="evidence" value="ECO:0007669"/>
    <property type="project" value="UniProtKB-UniRule"/>
</dbReference>
<dbReference type="Gene3D" id="2.20.28.120">
    <property type="entry name" value="Ribosomal protein L33"/>
    <property type="match status" value="1"/>
</dbReference>
<dbReference type="HAMAP" id="MF_00294">
    <property type="entry name" value="Ribosomal_bL33"/>
    <property type="match status" value="1"/>
</dbReference>
<dbReference type="InterPro" id="IPR001705">
    <property type="entry name" value="Ribosomal_bL33"/>
</dbReference>
<dbReference type="InterPro" id="IPR018264">
    <property type="entry name" value="Ribosomal_bL33_CS"/>
</dbReference>
<dbReference type="InterPro" id="IPR038584">
    <property type="entry name" value="Ribosomal_bL33_sf"/>
</dbReference>
<dbReference type="InterPro" id="IPR011332">
    <property type="entry name" value="Ribosomal_zn-bd"/>
</dbReference>
<dbReference type="NCBIfam" id="NF001860">
    <property type="entry name" value="PRK00595.1"/>
    <property type="match status" value="1"/>
</dbReference>
<dbReference type="NCBIfam" id="TIGR01023">
    <property type="entry name" value="rpmG_bact"/>
    <property type="match status" value="1"/>
</dbReference>
<dbReference type="PANTHER" id="PTHR15238">
    <property type="entry name" value="54S RIBOSOMAL PROTEIN L39, MITOCHONDRIAL"/>
    <property type="match status" value="1"/>
</dbReference>
<dbReference type="PANTHER" id="PTHR15238:SF1">
    <property type="entry name" value="LARGE RIBOSOMAL SUBUNIT PROTEIN BL33M"/>
    <property type="match status" value="1"/>
</dbReference>
<dbReference type="Pfam" id="PF00471">
    <property type="entry name" value="Ribosomal_L33"/>
    <property type="match status" value="1"/>
</dbReference>
<dbReference type="SUPFAM" id="SSF57829">
    <property type="entry name" value="Zn-binding ribosomal proteins"/>
    <property type="match status" value="1"/>
</dbReference>
<dbReference type="PROSITE" id="PS00582">
    <property type="entry name" value="RIBOSOMAL_L33"/>
    <property type="match status" value="1"/>
</dbReference>
<protein>
    <recommendedName>
        <fullName evidence="1">Large ribosomal subunit protein bL33</fullName>
    </recommendedName>
    <alternativeName>
        <fullName evidence="2">50S ribosomal protein L33</fullName>
    </alternativeName>
</protein>
<comment type="similarity">
    <text evidence="1">Belongs to the bacterial ribosomal protein bL33 family.</text>
</comment>
<sequence>MAKPASIKIRLNSTADTGFFYVTKKNARTKTEKMVLKKYDPVIRKHVEFREGKIK</sequence>
<reference key="1">
    <citation type="journal article" date="2001" name="Proc. Natl. Acad. Sci. U.S.A.">
        <title>Complete genome sequence of Caulobacter crescentus.</title>
        <authorList>
            <person name="Nierman W.C."/>
            <person name="Feldblyum T.V."/>
            <person name="Laub M.T."/>
            <person name="Paulsen I.T."/>
            <person name="Nelson K.E."/>
            <person name="Eisen J.A."/>
            <person name="Heidelberg J.F."/>
            <person name="Alley M.R.K."/>
            <person name="Ohta N."/>
            <person name="Maddock J.R."/>
            <person name="Potocka I."/>
            <person name="Nelson W.C."/>
            <person name="Newton A."/>
            <person name="Stephens C."/>
            <person name="Phadke N.D."/>
            <person name="Ely B."/>
            <person name="DeBoy R.T."/>
            <person name="Dodson R.J."/>
            <person name="Durkin A.S."/>
            <person name="Gwinn M.L."/>
            <person name="Haft D.H."/>
            <person name="Kolonay J.F."/>
            <person name="Smit J."/>
            <person name="Craven M.B."/>
            <person name="Khouri H.M."/>
            <person name="Shetty J."/>
            <person name="Berry K.J."/>
            <person name="Utterback T.R."/>
            <person name="Tran K."/>
            <person name="Wolf A.M."/>
            <person name="Vamathevan J.J."/>
            <person name="Ermolaeva M.D."/>
            <person name="White O."/>
            <person name="Salzberg S.L."/>
            <person name="Venter J.C."/>
            <person name="Shapiro L."/>
            <person name="Fraser C.M."/>
        </authorList>
    </citation>
    <scope>NUCLEOTIDE SEQUENCE [LARGE SCALE GENOMIC DNA]</scope>
    <source>
        <strain>ATCC 19089 / CIP 103742 / CB 15</strain>
    </source>
</reference>
<organism>
    <name type="scientific">Caulobacter vibrioides (strain ATCC 19089 / CIP 103742 / CB 15)</name>
    <name type="common">Caulobacter crescentus</name>
    <dbReference type="NCBI Taxonomy" id="190650"/>
    <lineage>
        <taxon>Bacteria</taxon>
        <taxon>Pseudomonadati</taxon>
        <taxon>Pseudomonadota</taxon>
        <taxon>Alphaproteobacteria</taxon>
        <taxon>Caulobacterales</taxon>
        <taxon>Caulobacteraceae</taxon>
        <taxon>Caulobacter</taxon>
    </lineage>
</organism>
<evidence type="ECO:0000255" key="1">
    <source>
        <dbReference type="HAMAP-Rule" id="MF_00294"/>
    </source>
</evidence>
<evidence type="ECO:0000305" key="2"/>
<accession>Q9A5I8</accession>
<proteinExistence type="inferred from homology"/>